<sequence>MSKRDIVLTNVTVVQLLRQPCPVTRAPPPPEPKAEVEPQPQPEPTPVREEIKPPPPPLPPHPATPPPKMVSVARELTVGINGFGRIGRLVLRACMEKGVKVVAVNDPFIDPEYMVYMFKYDSTHGRYKGSVEFRNGQLVVDNHEISVYQCKEPKQIPWRAVGSPYVVESTGVYLSIQAASDHISAGAQRVVISAPSPDAPMFVMGVNENDYNPGSMNIVSNASCTTNCLAPLAKVIHERFGIVEGLMTTVHSYTATQKTVDGPSRKAWRDGRGAHQNIIPASTGAAKAVTKVIPELKGKLTGMAFRVPTPDVSVVDLTCRLAQPAPYSAIKEAVKAAAKGPMAGILAYTEDEVVSTDFLGDTHSSIFDAKAGIALNDNFVKLISWYDNEYGYSHRVVDLLRYMFSRDK</sequence>
<comment type="function">
    <text evidence="1">May play an important role in regulating the switch between different pathways for energy production during spermiogenesis and in the spermatozoon. Required for sperm motility and male fertility (By similarity).</text>
</comment>
<comment type="catalytic activity">
    <reaction evidence="2">
        <text>D-glyceraldehyde 3-phosphate + phosphate + NAD(+) = (2R)-3-phospho-glyceroyl phosphate + NADH + H(+)</text>
        <dbReference type="Rhea" id="RHEA:10300"/>
        <dbReference type="ChEBI" id="CHEBI:15378"/>
        <dbReference type="ChEBI" id="CHEBI:43474"/>
        <dbReference type="ChEBI" id="CHEBI:57540"/>
        <dbReference type="ChEBI" id="CHEBI:57604"/>
        <dbReference type="ChEBI" id="CHEBI:57945"/>
        <dbReference type="ChEBI" id="CHEBI:59776"/>
        <dbReference type="EC" id="1.2.1.12"/>
    </reaction>
</comment>
<comment type="pathway">
    <text>Carbohydrate degradation; glycolysis; pyruvate from D-glyceraldehyde 3-phosphate: step 1/5.</text>
</comment>
<comment type="subunit">
    <text evidence="4 5 6">Homotetramer. Interacts with ARRB2; the interaction is detected in the nucleus upon OR1D2 stimulation.</text>
</comment>
<comment type="interaction">
    <interactant intactId="EBI-1057431">
        <id>O14556</id>
    </interactant>
    <interactant intactId="EBI-10268935">
        <id>Q8NA57</id>
        <label>C12orf50</label>
    </interactant>
    <organismsDiffer>false</organismsDiffer>
    <experiments>2</experiments>
</comment>
<comment type="interaction">
    <interactant intactId="EBI-1057431">
        <id>O14556</id>
    </interactant>
    <interactant intactId="EBI-3917045">
        <id>Q6PI48</id>
        <label>DARS2</label>
    </interactant>
    <organismsDiffer>false</organismsDiffer>
    <experiments>2</experiments>
</comment>
<comment type="interaction">
    <interactant intactId="EBI-1057431">
        <id>O14556</id>
    </interactant>
    <interactant intactId="EBI-354056">
        <id>P04406</id>
        <label>GAPDH</label>
    </interactant>
    <organismsDiffer>false</organismsDiffer>
    <experiments>3</experiments>
</comment>
<comment type="interaction">
    <interactant intactId="EBI-1057431">
        <id>O14556</id>
    </interactant>
    <interactant intactId="EBI-11721746">
        <id>Q8TED1</id>
        <label>GPX8</label>
    </interactant>
    <organismsDiffer>false</organismsDiffer>
    <experiments>2</experiments>
</comment>
<comment type="interaction">
    <interactant intactId="EBI-1057431">
        <id>O14556</id>
    </interactant>
    <interactant intactId="EBI-20720959">
        <id>Q2M3T9</id>
        <label>HYAL4</label>
    </interactant>
    <organismsDiffer>false</organismsDiffer>
    <experiments>2</experiments>
</comment>
<comment type="interaction">
    <interactant intactId="EBI-1057431">
        <id>O14556</id>
    </interactant>
    <interactant intactId="EBI-21691881">
        <id>Q8N635</id>
        <label>MEIOB</label>
    </interactant>
    <organismsDiffer>false</organismsDiffer>
    <experiments>2</experiments>
</comment>
<comment type="interaction">
    <interactant intactId="EBI-1057431">
        <id>O14556</id>
    </interactant>
    <interactant intactId="EBI-3920969">
        <id>Q6N075</id>
        <label>MFSD5</label>
    </interactant>
    <organismsDiffer>false</organismsDiffer>
    <experiments>2</experiments>
</comment>
<comment type="interaction">
    <interactant intactId="EBI-1057431">
        <id>O14556</id>
    </interactant>
    <interactant intactId="EBI-21022766">
        <id>P31639</id>
        <label>SLC5A2</label>
    </interactant>
    <organismsDiffer>false</organismsDiffer>
    <experiments>2</experiments>
</comment>
<comment type="interaction">
    <interactant intactId="EBI-1057431">
        <id>O14556</id>
    </interactant>
    <interactant intactId="EBI-741515">
        <id>Q9NVV9</id>
        <label>THAP1</label>
    </interactant>
    <organismsDiffer>false</organismsDiffer>
    <experiments>2</experiments>
</comment>
<comment type="interaction">
    <interactant intactId="EBI-1057431">
        <id>O14556</id>
    </interactant>
    <interactant intactId="EBI-746595">
        <id>Q96E35</id>
        <label>ZMYND19</label>
    </interactant>
    <organismsDiffer>false</organismsDiffer>
    <experiments>3</experiments>
</comment>
<comment type="subcellular location">
    <subcellularLocation>
        <location evidence="1">Cytoplasm</location>
    </subcellularLocation>
</comment>
<comment type="tissue specificity">
    <text>Testis specific.</text>
</comment>
<comment type="domain">
    <text evidence="5">The testis-specific N-terminal extension mediates tight association with the cytoskeletal fibrous sheath of the spermatozoa flagellum, possibly via interchain disulfide-bonding of Cys-21 with sheath components.</text>
</comment>
<comment type="similarity">
    <text evidence="7">Belongs to the glyceraldehyde-3-phosphate dehydrogenase family.</text>
</comment>
<evidence type="ECO:0000250" key="1"/>
<evidence type="ECO:0000255" key="2">
    <source>
        <dbReference type="PROSITE-ProRule" id="PRU10009"/>
    </source>
</evidence>
<evidence type="ECO:0000256" key="3">
    <source>
        <dbReference type="SAM" id="MobiDB-lite"/>
    </source>
</evidence>
<evidence type="ECO:0000269" key="4">
    <source>
    </source>
</evidence>
<evidence type="ECO:0000269" key="5">
    <source>
    </source>
</evidence>
<evidence type="ECO:0000269" key="6">
    <source>
    </source>
</evidence>
<evidence type="ECO:0000305" key="7"/>
<evidence type="ECO:0007829" key="8">
    <source>
        <dbReference type="PDB" id="3H9E"/>
    </source>
</evidence>
<organism>
    <name type="scientific">Homo sapiens</name>
    <name type="common">Human</name>
    <dbReference type="NCBI Taxonomy" id="9606"/>
    <lineage>
        <taxon>Eukaryota</taxon>
        <taxon>Metazoa</taxon>
        <taxon>Chordata</taxon>
        <taxon>Craniata</taxon>
        <taxon>Vertebrata</taxon>
        <taxon>Euteleostomi</taxon>
        <taxon>Mammalia</taxon>
        <taxon>Eutheria</taxon>
        <taxon>Euarchontoglires</taxon>
        <taxon>Primates</taxon>
        <taxon>Haplorrhini</taxon>
        <taxon>Catarrhini</taxon>
        <taxon>Hominidae</taxon>
        <taxon>Homo</taxon>
    </lineage>
</organism>
<feature type="chain" id="PRO_0000145502" description="Glyceraldehyde-3-phosphate dehydrogenase, testis-specific">
    <location>
        <begin position="1"/>
        <end position="408"/>
    </location>
</feature>
<feature type="region of interest" description="Testis-specific N-terminal extension">
    <location>
        <begin position="1"/>
        <end position="73"/>
    </location>
</feature>
<feature type="region of interest" description="Disordered" evidence="3">
    <location>
        <begin position="19"/>
        <end position="68"/>
    </location>
</feature>
<feature type="compositionally biased region" description="Pro residues" evidence="3">
    <location>
        <begin position="53"/>
        <end position="68"/>
    </location>
</feature>
<feature type="active site" description="Nucleophile" evidence="2 6">
    <location>
        <position position="224"/>
    </location>
</feature>
<feature type="binding site" evidence="6">
    <location>
        <begin position="85"/>
        <end position="86"/>
    </location>
    <ligand>
        <name>NAD(+)</name>
        <dbReference type="ChEBI" id="CHEBI:57540"/>
    </ligand>
</feature>
<feature type="binding site" evidence="6">
    <location>
        <position position="106"/>
    </location>
    <ligand>
        <name>NAD(+)</name>
        <dbReference type="ChEBI" id="CHEBI:57540"/>
    </ligand>
</feature>
<feature type="binding site" evidence="6">
    <location>
        <position position="151"/>
    </location>
    <ligand>
        <name>NAD(+)</name>
        <dbReference type="ChEBI" id="CHEBI:57540"/>
    </ligand>
</feature>
<feature type="binding site" evidence="6">
    <location>
        <position position="173"/>
    </location>
    <ligand>
        <name>NAD(+)</name>
        <dbReference type="ChEBI" id="CHEBI:57540"/>
    </ligand>
</feature>
<feature type="binding site" evidence="6">
    <location>
        <position position="193"/>
    </location>
    <ligand>
        <name>NAD(+)</name>
        <dbReference type="ChEBI" id="CHEBI:57540"/>
    </ligand>
</feature>
<feature type="binding site" evidence="1">
    <location>
        <begin position="223"/>
        <end position="225"/>
    </location>
    <ligand>
        <name>D-glyceraldehyde 3-phosphate</name>
        <dbReference type="ChEBI" id="CHEBI:59776"/>
    </ligand>
</feature>
<feature type="binding site" evidence="1">
    <location>
        <position position="254"/>
    </location>
    <ligand>
        <name>D-glyceraldehyde 3-phosphate</name>
        <dbReference type="ChEBI" id="CHEBI:59776"/>
    </ligand>
</feature>
<feature type="binding site" evidence="1">
    <location>
        <begin position="283"/>
        <end position="284"/>
    </location>
    <ligand>
        <name>D-glyceraldehyde 3-phosphate</name>
        <dbReference type="ChEBI" id="CHEBI:59776"/>
    </ligand>
</feature>
<feature type="binding site" evidence="1">
    <location>
        <position position="306"/>
    </location>
    <ligand>
        <name>D-glyceraldehyde 3-phosphate</name>
        <dbReference type="ChEBI" id="CHEBI:59776"/>
    </ligand>
</feature>
<feature type="binding site" evidence="6">
    <location>
        <position position="388"/>
    </location>
    <ligand>
        <name>NAD(+)</name>
        <dbReference type="ChEBI" id="CHEBI:57540"/>
    </ligand>
</feature>
<feature type="site" description="Activates thiol group during catalysis">
    <location>
        <position position="251"/>
    </location>
</feature>
<feature type="sequence variant" id="VAR_049219" description="In dbSNP:rs2285514.">
    <original>D</original>
    <variation>N</variation>
    <location>
        <position position="110"/>
    </location>
</feature>
<feature type="sequence conflict" description="In Ref. 5; AAB64181." evidence="7" ref="5">
    <original>S</original>
    <variation>SVRAHLGCFS</variation>
    <location>
        <position position="220"/>
    </location>
</feature>
<feature type="sequence conflict" description="In Ref. 3; AAQ75383." evidence="7" ref="3">
    <original>G</original>
    <variation>V</variation>
    <location>
        <position position="273"/>
    </location>
</feature>
<feature type="sequence conflict" description="In Ref. 2; AAF87970." evidence="7" ref="2">
    <original>A</original>
    <variation>R</variation>
    <location>
        <position position="343"/>
    </location>
</feature>
<feature type="strand" evidence="8">
    <location>
        <begin position="77"/>
        <end position="81"/>
    </location>
</feature>
<feature type="helix" evidence="8">
    <location>
        <begin position="85"/>
        <end position="96"/>
    </location>
</feature>
<feature type="strand" evidence="8">
    <location>
        <begin position="100"/>
        <end position="105"/>
    </location>
</feature>
<feature type="helix" evidence="8">
    <location>
        <begin position="111"/>
        <end position="119"/>
    </location>
</feature>
<feature type="turn" evidence="8">
    <location>
        <begin position="122"/>
        <end position="124"/>
    </location>
</feature>
<feature type="strand" evidence="8">
    <location>
        <begin position="131"/>
        <end position="134"/>
    </location>
</feature>
<feature type="strand" evidence="8">
    <location>
        <begin position="137"/>
        <end position="140"/>
    </location>
</feature>
<feature type="strand" evidence="8">
    <location>
        <begin position="143"/>
        <end position="148"/>
    </location>
</feature>
<feature type="helix" evidence="8">
    <location>
        <begin position="153"/>
        <end position="155"/>
    </location>
</feature>
<feature type="helix" evidence="8">
    <location>
        <begin position="158"/>
        <end position="161"/>
    </location>
</feature>
<feature type="strand" evidence="8">
    <location>
        <begin position="165"/>
        <end position="168"/>
    </location>
</feature>
<feature type="strand" evidence="8">
    <location>
        <begin position="170"/>
        <end position="172"/>
    </location>
</feature>
<feature type="helix" evidence="8">
    <location>
        <begin position="176"/>
        <end position="184"/>
    </location>
</feature>
<feature type="strand" evidence="8">
    <location>
        <begin position="188"/>
        <end position="194"/>
    </location>
</feature>
<feature type="strand" evidence="8">
    <location>
        <begin position="197"/>
        <end position="199"/>
    </location>
</feature>
<feature type="turn" evidence="8">
    <location>
        <begin position="204"/>
        <end position="206"/>
    </location>
</feature>
<feature type="helix" evidence="8">
    <location>
        <begin position="208"/>
        <end position="210"/>
    </location>
</feature>
<feature type="turn" evidence="8">
    <location>
        <begin position="213"/>
        <end position="215"/>
    </location>
</feature>
<feature type="strand" evidence="8">
    <location>
        <begin position="217"/>
        <end position="220"/>
    </location>
</feature>
<feature type="helix" evidence="8">
    <location>
        <begin position="224"/>
        <end position="240"/>
    </location>
</feature>
<feature type="strand" evidence="8">
    <location>
        <begin position="242"/>
        <end position="252"/>
    </location>
</feature>
<feature type="strand" evidence="8">
    <location>
        <begin position="257"/>
        <end position="261"/>
    </location>
</feature>
<feature type="helix" evidence="8">
    <location>
        <begin position="268"/>
        <end position="271"/>
    </location>
</feature>
<feature type="turn" evidence="8">
    <location>
        <begin position="274"/>
        <end position="276"/>
    </location>
</feature>
<feature type="strand" evidence="8">
    <location>
        <begin position="279"/>
        <end position="281"/>
    </location>
</feature>
<feature type="helix" evidence="8">
    <location>
        <begin position="285"/>
        <end position="292"/>
    </location>
</feature>
<feature type="helix" evidence="8">
    <location>
        <begin position="294"/>
        <end position="296"/>
    </location>
</feature>
<feature type="turn" evidence="8">
    <location>
        <begin position="297"/>
        <end position="299"/>
    </location>
</feature>
<feature type="strand" evidence="8">
    <location>
        <begin position="300"/>
        <end position="308"/>
    </location>
</feature>
<feature type="strand" evidence="8">
    <location>
        <begin position="313"/>
        <end position="323"/>
    </location>
</feature>
<feature type="helix" evidence="8">
    <location>
        <begin position="327"/>
        <end position="339"/>
    </location>
</feature>
<feature type="turn" evidence="8">
    <location>
        <begin position="340"/>
        <end position="345"/>
    </location>
</feature>
<feature type="strand" evidence="8">
    <location>
        <begin position="346"/>
        <end position="349"/>
    </location>
</feature>
<feature type="helix" evidence="8">
    <location>
        <begin position="355"/>
        <end position="358"/>
    </location>
</feature>
<feature type="strand" evidence="8">
    <location>
        <begin position="364"/>
        <end position="368"/>
    </location>
</feature>
<feature type="turn" evidence="8">
    <location>
        <begin position="369"/>
        <end position="371"/>
    </location>
</feature>
<feature type="strand" evidence="8">
    <location>
        <begin position="373"/>
        <end position="376"/>
    </location>
</feature>
<feature type="strand" evidence="8">
    <location>
        <begin position="379"/>
        <end position="386"/>
    </location>
</feature>
<feature type="helix" evidence="8">
    <location>
        <begin position="390"/>
        <end position="407"/>
    </location>
</feature>
<proteinExistence type="evidence at protein level"/>
<dbReference type="EC" id="1.2.1.12"/>
<dbReference type="EMBL" id="AJ005371">
    <property type="protein sequence ID" value="CAA06501.1"/>
    <property type="molecule type" value="mRNA"/>
</dbReference>
<dbReference type="EMBL" id="AF216641">
    <property type="protein sequence ID" value="AAF87970.1"/>
    <property type="molecule type" value="Genomic_DNA"/>
</dbReference>
<dbReference type="EMBL" id="AF216631">
    <property type="protein sequence ID" value="AAF87970.1"/>
    <property type="status" value="JOINED"/>
    <property type="molecule type" value="Genomic_DNA"/>
</dbReference>
<dbReference type="EMBL" id="AF216632">
    <property type="protein sequence ID" value="AAF87970.1"/>
    <property type="status" value="JOINED"/>
    <property type="molecule type" value="Genomic_DNA"/>
</dbReference>
<dbReference type="EMBL" id="AF216633">
    <property type="protein sequence ID" value="AAF87970.1"/>
    <property type="status" value="JOINED"/>
    <property type="molecule type" value="Genomic_DNA"/>
</dbReference>
<dbReference type="EMBL" id="AF216634">
    <property type="protein sequence ID" value="AAF87970.1"/>
    <property type="status" value="JOINED"/>
    <property type="molecule type" value="Genomic_DNA"/>
</dbReference>
<dbReference type="EMBL" id="AF216635">
    <property type="protein sequence ID" value="AAF87970.1"/>
    <property type="status" value="JOINED"/>
    <property type="molecule type" value="Genomic_DNA"/>
</dbReference>
<dbReference type="EMBL" id="AF216636">
    <property type="protein sequence ID" value="AAF87970.1"/>
    <property type="status" value="JOINED"/>
    <property type="molecule type" value="Genomic_DNA"/>
</dbReference>
<dbReference type="EMBL" id="AF216637">
    <property type="protein sequence ID" value="AAF87970.1"/>
    <property type="status" value="JOINED"/>
    <property type="molecule type" value="Genomic_DNA"/>
</dbReference>
<dbReference type="EMBL" id="AF216638">
    <property type="protein sequence ID" value="AAF87970.1"/>
    <property type="status" value="JOINED"/>
    <property type="molecule type" value="Genomic_DNA"/>
</dbReference>
<dbReference type="EMBL" id="AF216639">
    <property type="protein sequence ID" value="AAF87970.1"/>
    <property type="status" value="JOINED"/>
    <property type="molecule type" value="Genomic_DNA"/>
</dbReference>
<dbReference type="EMBL" id="AF216640">
    <property type="protein sequence ID" value="AAF87970.1"/>
    <property type="status" value="JOINED"/>
    <property type="molecule type" value="Genomic_DNA"/>
</dbReference>
<dbReference type="EMBL" id="AY306129">
    <property type="protein sequence ID" value="AAQ75383.1"/>
    <property type="molecule type" value="mRNA"/>
</dbReference>
<dbReference type="EMBL" id="AK314980">
    <property type="protein sequence ID" value="BAG37479.1"/>
    <property type="molecule type" value="mRNA"/>
</dbReference>
<dbReference type="EMBL" id="AC002389">
    <property type="protein sequence ID" value="AAB64181.1"/>
    <property type="molecule type" value="Genomic_DNA"/>
</dbReference>
<dbReference type="EMBL" id="BC036373">
    <property type="protein sequence ID" value="AAH36373.1"/>
    <property type="molecule type" value="mRNA"/>
</dbReference>
<dbReference type="CCDS" id="CCDS12465.1"/>
<dbReference type="RefSeq" id="NP_055179.1">
    <property type="nucleotide sequence ID" value="NM_014364.5"/>
</dbReference>
<dbReference type="PDB" id="3H9E">
    <property type="method" value="X-ray"/>
    <property type="resolution" value="1.72 A"/>
    <property type="chains" value="O/P=69-407"/>
</dbReference>
<dbReference type="PDB" id="3PFW">
    <property type="method" value="X-ray"/>
    <property type="resolution" value="2.15 A"/>
    <property type="chains" value="O/P=69-407"/>
</dbReference>
<dbReference type="PDB" id="5C7L">
    <property type="method" value="X-ray"/>
    <property type="resolution" value="1.86 A"/>
    <property type="chains" value="O/R=74-407"/>
</dbReference>
<dbReference type="PDB" id="5C7O">
    <property type="method" value="X-ray"/>
    <property type="resolution" value="1.73 A"/>
    <property type="chains" value="O/P=74-407"/>
</dbReference>
<dbReference type="PDBsum" id="3H9E"/>
<dbReference type="PDBsum" id="3PFW"/>
<dbReference type="PDBsum" id="5C7L"/>
<dbReference type="PDBsum" id="5C7O"/>
<dbReference type="SMR" id="O14556"/>
<dbReference type="BioGRID" id="117681">
    <property type="interactions" value="246"/>
</dbReference>
<dbReference type="FunCoup" id="O14556">
    <property type="interactions" value="448"/>
</dbReference>
<dbReference type="IntAct" id="O14556">
    <property type="interactions" value="149"/>
</dbReference>
<dbReference type="MINT" id="O14556"/>
<dbReference type="STRING" id="9606.ENSP00000222286"/>
<dbReference type="DrugBank" id="DB02205">
    <property type="generic name" value="(+)-Rutamarin alcohol"/>
</dbReference>
<dbReference type="DrugBank" id="DB04477">
    <property type="generic name" value="2'-Deoxy-2'-[(3,5-dimethoxybenzoyl)amino]-N-[(1R)-1,2,3,4-tetrahydro-1-naphthalenyl]adenosine"/>
</dbReference>
<dbReference type="DrugBank" id="DB11638">
    <property type="generic name" value="Artenimol"/>
</dbReference>
<dbReference type="DrugBank" id="DB03331">
    <property type="generic name" value="N-naphthalen-1-ylmethyl-2'-[3,5-dimethoxybenzamido]-2'-deoxy-adenosine"/>
</dbReference>
<dbReference type="DrugBank" id="DB00157">
    <property type="generic name" value="NADH"/>
</dbReference>
<dbReference type="DrugBank" id="DB01593">
    <property type="generic name" value="Zinc"/>
</dbReference>
<dbReference type="DrugBank" id="DB14487">
    <property type="generic name" value="Zinc acetate"/>
</dbReference>
<dbReference type="DrugBank" id="DB14533">
    <property type="generic name" value="Zinc chloride"/>
</dbReference>
<dbReference type="DrugBank" id="DB14548">
    <property type="generic name" value="Zinc sulfate, unspecified form"/>
</dbReference>
<dbReference type="GlyGen" id="O14556">
    <property type="glycosylation" value="2 sites, 1 O-linked glycan (1 site)"/>
</dbReference>
<dbReference type="iPTMnet" id="O14556"/>
<dbReference type="MetOSite" id="O14556"/>
<dbReference type="PhosphoSitePlus" id="O14556"/>
<dbReference type="BioMuta" id="GAPDHS"/>
<dbReference type="jPOST" id="O14556"/>
<dbReference type="MassIVE" id="O14556"/>
<dbReference type="PaxDb" id="9606-ENSP00000222286"/>
<dbReference type="PeptideAtlas" id="O14556"/>
<dbReference type="ProteomicsDB" id="48082"/>
<dbReference type="Antibodypedia" id="29443">
    <property type="antibodies" value="365 antibodies from 35 providers"/>
</dbReference>
<dbReference type="DNASU" id="26330"/>
<dbReference type="Ensembl" id="ENST00000222286.9">
    <property type="protein sequence ID" value="ENSP00000222286.3"/>
    <property type="gene ID" value="ENSG00000105679.9"/>
</dbReference>
<dbReference type="GeneID" id="26330"/>
<dbReference type="KEGG" id="hsa:26330"/>
<dbReference type="MANE-Select" id="ENST00000222286.9">
    <property type="protein sequence ID" value="ENSP00000222286.3"/>
    <property type="RefSeq nucleotide sequence ID" value="NM_014364.5"/>
    <property type="RefSeq protein sequence ID" value="NP_055179.1"/>
</dbReference>
<dbReference type="UCSC" id="uc002oaf.2">
    <property type="organism name" value="human"/>
</dbReference>
<dbReference type="AGR" id="HGNC:24864"/>
<dbReference type="CTD" id="26330"/>
<dbReference type="DisGeNET" id="26330"/>
<dbReference type="GeneCards" id="GAPDHS"/>
<dbReference type="HGNC" id="HGNC:24864">
    <property type="gene designation" value="GAPDHS"/>
</dbReference>
<dbReference type="HPA" id="ENSG00000105679">
    <property type="expression patterns" value="Tissue enriched (testis)"/>
</dbReference>
<dbReference type="MalaCards" id="GAPDHS"/>
<dbReference type="MIM" id="609169">
    <property type="type" value="gene"/>
</dbReference>
<dbReference type="neXtProt" id="NX_O14556"/>
<dbReference type="OpenTargets" id="ENSG00000105679"/>
<dbReference type="PharmGKB" id="PA134934259"/>
<dbReference type="VEuPathDB" id="HostDB:ENSG00000105679"/>
<dbReference type="eggNOG" id="KOG0657">
    <property type="taxonomic scope" value="Eukaryota"/>
</dbReference>
<dbReference type="GeneTree" id="ENSGT00940000160272"/>
<dbReference type="HOGENOM" id="CLU_030140_0_3_1"/>
<dbReference type="InParanoid" id="O14556"/>
<dbReference type="OMA" id="ENMVKIM"/>
<dbReference type="OrthoDB" id="1152826at2759"/>
<dbReference type="PAN-GO" id="O14556">
    <property type="GO annotations" value="3 GO annotations based on evolutionary models"/>
</dbReference>
<dbReference type="PhylomeDB" id="O14556"/>
<dbReference type="TreeFam" id="TF300533"/>
<dbReference type="BioCyc" id="MetaCyc:HS02793-MONOMER"/>
<dbReference type="BRENDA" id="1.2.1.12">
    <property type="organism ID" value="2681"/>
</dbReference>
<dbReference type="PathwayCommons" id="O14556"/>
<dbReference type="Reactome" id="R-HSA-390471">
    <property type="pathway name" value="Association of TriC/CCT with target proteins during biosynthesis"/>
</dbReference>
<dbReference type="Reactome" id="R-HSA-70171">
    <property type="pathway name" value="Glycolysis"/>
</dbReference>
<dbReference type="Reactome" id="R-HSA-70263">
    <property type="pathway name" value="Gluconeogenesis"/>
</dbReference>
<dbReference type="SignaLink" id="O14556"/>
<dbReference type="SIGNOR" id="O14556"/>
<dbReference type="UniPathway" id="UPA00109">
    <property type="reaction ID" value="UER00184"/>
</dbReference>
<dbReference type="BioGRID-ORCS" id="26330">
    <property type="hits" value="11 hits in 1149 CRISPR screens"/>
</dbReference>
<dbReference type="ChiTaRS" id="GAPDHS">
    <property type="organism name" value="human"/>
</dbReference>
<dbReference type="EvolutionaryTrace" id="O14556"/>
<dbReference type="GeneWiki" id="GAPDHS"/>
<dbReference type="GenomeRNAi" id="26330"/>
<dbReference type="Pharos" id="O14556">
    <property type="development level" value="Tbio"/>
</dbReference>
<dbReference type="PRO" id="PR:O14556"/>
<dbReference type="Proteomes" id="UP000005640">
    <property type="component" value="Chromosome 19"/>
</dbReference>
<dbReference type="RNAct" id="O14556">
    <property type="molecule type" value="protein"/>
</dbReference>
<dbReference type="Bgee" id="ENSG00000105679">
    <property type="expression patterns" value="Expressed in left testis and 109 other cell types or tissues"/>
</dbReference>
<dbReference type="ExpressionAtlas" id="O14556">
    <property type="expression patterns" value="baseline and differential"/>
</dbReference>
<dbReference type="GO" id="GO:0005829">
    <property type="term" value="C:cytosol"/>
    <property type="evidence" value="ECO:0000318"/>
    <property type="project" value="GO_Central"/>
</dbReference>
<dbReference type="GO" id="GO:0005634">
    <property type="term" value="C:nucleus"/>
    <property type="evidence" value="ECO:0007005"/>
    <property type="project" value="UniProtKB"/>
</dbReference>
<dbReference type="GO" id="GO:0004365">
    <property type="term" value="F:glyceraldehyde-3-phosphate dehydrogenase (NAD+) (phosphorylating) activity"/>
    <property type="evidence" value="ECO:0000318"/>
    <property type="project" value="GO_Central"/>
</dbReference>
<dbReference type="GO" id="GO:0051287">
    <property type="term" value="F:NAD binding"/>
    <property type="evidence" value="ECO:0007669"/>
    <property type="project" value="InterPro"/>
</dbReference>
<dbReference type="GO" id="GO:0050661">
    <property type="term" value="F:NADP binding"/>
    <property type="evidence" value="ECO:0007669"/>
    <property type="project" value="InterPro"/>
</dbReference>
<dbReference type="GO" id="GO:0030317">
    <property type="term" value="P:flagellated sperm motility"/>
    <property type="evidence" value="ECO:0000250"/>
    <property type="project" value="UniProtKB"/>
</dbReference>
<dbReference type="GO" id="GO:0006006">
    <property type="term" value="P:glucose metabolic process"/>
    <property type="evidence" value="ECO:0007669"/>
    <property type="project" value="InterPro"/>
</dbReference>
<dbReference type="GO" id="GO:0006096">
    <property type="term" value="P:glycolytic process"/>
    <property type="evidence" value="ECO:0000318"/>
    <property type="project" value="GO_Central"/>
</dbReference>
<dbReference type="GO" id="GO:0045821">
    <property type="term" value="P:positive regulation of glycolytic process"/>
    <property type="evidence" value="ECO:0000304"/>
    <property type="project" value="UniProtKB"/>
</dbReference>
<dbReference type="CDD" id="cd18126">
    <property type="entry name" value="GAPDH_I_C"/>
    <property type="match status" value="1"/>
</dbReference>
<dbReference type="CDD" id="cd05214">
    <property type="entry name" value="GAPDH_I_N"/>
    <property type="match status" value="1"/>
</dbReference>
<dbReference type="FunFam" id="3.30.360.10:FF:000001">
    <property type="entry name" value="Glyceraldehyde-3-phosphate dehydrogenase"/>
    <property type="match status" value="1"/>
</dbReference>
<dbReference type="FunFam" id="3.40.50.720:FF:000020">
    <property type="entry name" value="Glyceraldehyde-3-phosphate dehydrogenase"/>
    <property type="match status" value="1"/>
</dbReference>
<dbReference type="Gene3D" id="3.30.360.10">
    <property type="entry name" value="Dihydrodipicolinate Reductase, domain 2"/>
    <property type="match status" value="1"/>
</dbReference>
<dbReference type="Gene3D" id="3.40.50.720">
    <property type="entry name" value="NAD(P)-binding Rossmann-like Domain"/>
    <property type="match status" value="1"/>
</dbReference>
<dbReference type="InterPro" id="IPR020831">
    <property type="entry name" value="GlycerAld/Erythrose_P_DH"/>
</dbReference>
<dbReference type="InterPro" id="IPR020830">
    <property type="entry name" value="GlycerAld_3-P_DH_AS"/>
</dbReference>
<dbReference type="InterPro" id="IPR020829">
    <property type="entry name" value="GlycerAld_3-P_DH_cat"/>
</dbReference>
<dbReference type="InterPro" id="IPR020828">
    <property type="entry name" value="GlycerAld_3-P_DH_NAD(P)-bd"/>
</dbReference>
<dbReference type="InterPro" id="IPR006424">
    <property type="entry name" value="Glyceraldehyde-3-P_DH_1"/>
</dbReference>
<dbReference type="InterPro" id="IPR036291">
    <property type="entry name" value="NAD(P)-bd_dom_sf"/>
</dbReference>
<dbReference type="NCBIfam" id="TIGR01534">
    <property type="entry name" value="GAPDH-I"/>
    <property type="match status" value="1"/>
</dbReference>
<dbReference type="PANTHER" id="PTHR10836">
    <property type="entry name" value="GLYCERALDEHYDE 3-PHOSPHATE DEHYDROGENASE"/>
    <property type="match status" value="1"/>
</dbReference>
<dbReference type="PANTHER" id="PTHR10836:SF79">
    <property type="entry name" value="GLYCERALDEHYDE-3-PHOSPHATE DEHYDROGENASE, TESTIS-SPECIFIC"/>
    <property type="match status" value="1"/>
</dbReference>
<dbReference type="Pfam" id="PF02800">
    <property type="entry name" value="Gp_dh_C"/>
    <property type="match status" value="1"/>
</dbReference>
<dbReference type="Pfam" id="PF00044">
    <property type="entry name" value="Gp_dh_N"/>
    <property type="match status" value="1"/>
</dbReference>
<dbReference type="PRINTS" id="PR00078">
    <property type="entry name" value="G3PDHDRGNASE"/>
</dbReference>
<dbReference type="SMART" id="SM00846">
    <property type="entry name" value="Gp_dh_N"/>
    <property type="match status" value="1"/>
</dbReference>
<dbReference type="SUPFAM" id="SSF55347">
    <property type="entry name" value="Glyceraldehyde-3-phosphate dehydrogenase-like, C-terminal domain"/>
    <property type="match status" value="1"/>
</dbReference>
<dbReference type="SUPFAM" id="SSF51735">
    <property type="entry name" value="NAD(P)-binding Rossmann-fold domains"/>
    <property type="match status" value="1"/>
</dbReference>
<dbReference type="PROSITE" id="PS00071">
    <property type="entry name" value="GAPDH"/>
    <property type="match status" value="1"/>
</dbReference>
<protein>
    <recommendedName>
        <fullName>Glyceraldehyde-3-phosphate dehydrogenase, testis-specific</fullName>
        <ecNumber>1.2.1.12</ecNumber>
    </recommendedName>
    <alternativeName>
        <fullName>Spermatogenic cell-specific glyceraldehyde 3-phosphate dehydrogenase 2</fullName>
        <shortName>GAPDH-2</shortName>
    </alternativeName>
    <alternativeName>
        <fullName>Spermatogenic glyceraldehyde-3-phosphate dehydrogenase</fullName>
    </alternativeName>
</protein>
<accession>O14556</accession>
<accession>B2RC82</accession>
<accession>O60823</accession>
<accession>Q6JTT9</accession>
<accession>Q9HCU6</accession>
<reference key="1">
    <citation type="submission" date="1998-04" db="EMBL/GenBank/DDBJ databases">
        <title>Nucleotide sequence of human testis-specific glyceraldehyde-3-phosphate dehydrogenase (GAPDH-2) cDNA.</title>
        <authorList>
            <person name="McLaughlin E.A."/>
            <person name="Hall L."/>
        </authorList>
    </citation>
    <scope>NUCLEOTIDE SEQUENCE [MRNA]</scope>
    <source>
        <tissue>Testis</tissue>
    </source>
</reference>
<reference key="2">
    <citation type="journal article" date="2000" name="J. Androl.">
        <title>Human glyceraldehyde 3-phosphate dehydrogenase-2 gene is expressed specifically in spermatogenic cells.</title>
        <authorList>
            <person name="Welch J.E."/>
            <person name="Brown P.L."/>
            <person name="O'Brien D.A."/>
            <person name="Magyar P.L."/>
            <person name="Bunch D.O."/>
            <person name="Mori C."/>
            <person name="Eddy E.M."/>
        </authorList>
    </citation>
    <scope>NUCLEOTIDE SEQUENCE [GENOMIC DNA]</scope>
</reference>
<reference key="3">
    <citation type="submission" date="2003-05" db="EMBL/GenBank/DDBJ databases">
        <title>A new spermatogenesis-related gene.</title>
        <authorList>
            <person name="Zhao H."/>
            <person name="Miao S.Y."/>
            <person name="Zhang X.D."/>
            <person name="Liang G."/>
            <person name="Qiao Y."/>
            <person name="Wang L.F."/>
        </authorList>
    </citation>
    <scope>NUCLEOTIDE SEQUENCE [LARGE SCALE MRNA]</scope>
    <source>
        <tissue>Testis</tissue>
    </source>
</reference>
<reference key="4">
    <citation type="journal article" date="2004" name="Nat. Genet.">
        <title>Complete sequencing and characterization of 21,243 full-length human cDNAs.</title>
        <authorList>
            <person name="Ota T."/>
            <person name="Suzuki Y."/>
            <person name="Nishikawa T."/>
            <person name="Otsuki T."/>
            <person name="Sugiyama T."/>
            <person name="Irie R."/>
            <person name="Wakamatsu A."/>
            <person name="Hayashi K."/>
            <person name="Sato H."/>
            <person name="Nagai K."/>
            <person name="Kimura K."/>
            <person name="Makita H."/>
            <person name="Sekine M."/>
            <person name="Obayashi M."/>
            <person name="Nishi T."/>
            <person name="Shibahara T."/>
            <person name="Tanaka T."/>
            <person name="Ishii S."/>
            <person name="Yamamoto J."/>
            <person name="Saito K."/>
            <person name="Kawai Y."/>
            <person name="Isono Y."/>
            <person name="Nakamura Y."/>
            <person name="Nagahari K."/>
            <person name="Murakami K."/>
            <person name="Yasuda T."/>
            <person name="Iwayanagi T."/>
            <person name="Wagatsuma M."/>
            <person name="Shiratori A."/>
            <person name="Sudo H."/>
            <person name="Hosoiri T."/>
            <person name="Kaku Y."/>
            <person name="Kodaira H."/>
            <person name="Kondo H."/>
            <person name="Sugawara M."/>
            <person name="Takahashi M."/>
            <person name="Kanda K."/>
            <person name="Yokoi T."/>
            <person name="Furuya T."/>
            <person name="Kikkawa E."/>
            <person name="Omura Y."/>
            <person name="Abe K."/>
            <person name="Kamihara K."/>
            <person name="Katsuta N."/>
            <person name="Sato K."/>
            <person name="Tanikawa M."/>
            <person name="Yamazaki M."/>
            <person name="Ninomiya K."/>
            <person name="Ishibashi T."/>
            <person name="Yamashita H."/>
            <person name="Murakawa K."/>
            <person name="Fujimori K."/>
            <person name="Tanai H."/>
            <person name="Kimata M."/>
            <person name="Watanabe M."/>
            <person name="Hiraoka S."/>
            <person name="Chiba Y."/>
            <person name="Ishida S."/>
            <person name="Ono Y."/>
            <person name="Takiguchi S."/>
            <person name="Watanabe S."/>
            <person name="Yosida M."/>
            <person name="Hotuta T."/>
            <person name="Kusano J."/>
            <person name="Kanehori K."/>
            <person name="Takahashi-Fujii A."/>
            <person name="Hara H."/>
            <person name="Tanase T.-O."/>
            <person name="Nomura Y."/>
            <person name="Togiya S."/>
            <person name="Komai F."/>
            <person name="Hara R."/>
            <person name="Takeuchi K."/>
            <person name="Arita M."/>
            <person name="Imose N."/>
            <person name="Musashino K."/>
            <person name="Yuuki H."/>
            <person name="Oshima A."/>
            <person name="Sasaki N."/>
            <person name="Aotsuka S."/>
            <person name="Yoshikawa Y."/>
            <person name="Matsunawa H."/>
            <person name="Ichihara T."/>
            <person name="Shiohata N."/>
            <person name="Sano S."/>
            <person name="Moriya S."/>
            <person name="Momiyama H."/>
            <person name="Satoh N."/>
            <person name="Takami S."/>
            <person name="Terashima Y."/>
            <person name="Suzuki O."/>
            <person name="Nakagawa S."/>
            <person name="Senoh A."/>
            <person name="Mizoguchi H."/>
            <person name="Goto Y."/>
            <person name="Shimizu F."/>
            <person name="Wakebe H."/>
            <person name="Hishigaki H."/>
            <person name="Watanabe T."/>
            <person name="Sugiyama A."/>
            <person name="Takemoto M."/>
            <person name="Kawakami B."/>
            <person name="Yamazaki M."/>
            <person name="Watanabe K."/>
            <person name="Kumagai A."/>
            <person name="Itakura S."/>
            <person name="Fukuzumi Y."/>
            <person name="Fujimori Y."/>
            <person name="Komiyama M."/>
            <person name="Tashiro H."/>
            <person name="Tanigami A."/>
            <person name="Fujiwara T."/>
            <person name="Ono T."/>
            <person name="Yamada K."/>
            <person name="Fujii Y."/>
            <person name="Ozaki K."/>
            <person name="Hirao M."/>
            <person name="Ohmori Y."/>
            <person name="Kawabata A."/>
            <person name="Hikiji T."/>
            <person name="Kobatake N."/>
            <person name="Inagaki H."/>
            <person name="Ikema Y."/>
            <person name="Okamoto S."/>
            <person name="Okitani R."/>
            <person name="Kawakami T."/>
            <person name="Noguchi S."/>
            <person name="Itoh T."/>
            <person name="Shigeta K."/>
            <person name="Senba T."/>
            <person name="Matsumura K."/>
            <person name="Nakajima Y."/>
            <person name="Mizuno T."/>
            <person name="Morinaga M."/>
            <person name="Sasaki M."/>
            <person name="Togashi T."/>
            <person name="Oyama M."/>
            <person name="Hata H."/>
            <person name="Watanabe M."/>
            <person name="Komatsu T."/>
            <person name="Mizushima-Sugano J."/>
            <person name="Satoh T."/>
            <person name="Shirai Y."/>
            <person name="Takahashi Y."/>
            <person name="Nakagawa K."/>
            <person name="Okumura K."/>
            <person name="Nagase T."/>
            <person name="Nomura N."/>
            <person name="Kikuchi H."/>
            <person name="Masuho Y."/>
            <person name="Yamashita R."/>
            <person name="Nakai K."/>
            <person name="Yada T."/>
            <person name="Nakamura Y."/>
            <person name="Ohara O."/>
            <person name="Isogai T."/>
            <person name="Sugano S."/>
        </authorList>
    </citation>
    <scope>NUCLEOTIDE SEQUENCE [LARGE SCALE MRNA]</scope>
    <source>
        <tissue>Testis</tissue>
    </source>
</reference>
<reference key="5">
    <citation type="journal article" date="2004" name="Nature">
        <title>The DNA sequence and biology of human chromosome 19.</title>
        <authorList>
            <person name="Grimwood J."/>
            <person name="Gordon L.A."/>
            <person name="Olsen A.S."/>
            <person name="Terry A."/>
            <person name="Schmutz J."/>
            <person name="Lamerdin J.E."/>
            <person name="Hellsten U."/>
            <person name="Goodstein D."/>
            <person name="Couronne O."/>
            <person name="Tran-Gyamfi M."/>
            <person name="Aerts A."/>
            <person name="Altherr M."/>
            <person name="Ashworth L."/>
            <person name="Bajorek E."/>
            <person name="Black S."/>
            <person name="Branscomb E."/>
            <person name="Caenepeel S."/>
            <person name="Carrano A.V."/>
            <person name="Caoile C."/>
            <person name="Chan Y.M."/>
            <person name="Christensen M."/>
            <person name="Cleland C.A."/>
            <person name="Copeland A."/>
            <person name="Dalin E."/>
            <person name="Dehal P."/>
            <person name="Denys M."/>
            <person name="Detter J.C."/>
            <person name="Escobar J."/>
            <person name="Flowers D."/>
            <person name="Fotopulos D."/>
            <person name="Garcia C."/>
            <person name="Georgescu A.M."/>
            <person name="Glavina T."/>
            <person name="Gomez M."/>
            <person name="Gonzales E."/>
            <person name="Groza M."/>
            <person name="Hammon N."/>
            <person name="Hawkins T."/>
            <person name="Haydu L."/>
            <person name="Ho I."/>
            <person name="Huang W."/>
            <person name="Israni S."/>
            <person name="Jett J."/>
            <person name="Kadner K."/>
            <person name="Kimball H."/>
            <person name="Kobayashi A."/>
            <person name="Larionov V."/>
            <person name="Leem S.-H."/>
            <person name="Lopez F."/>
            <person name="Lou Y."/>
            <person name="Lowry S."/>
            <person name="Malfatti S."/>
            <person name="Martinez D."/>
            <person name="McCready P.M."/>
            <person name="Medina C."/>
            <person name="Morgan J."/>
            <person name="Nelson K."/>
            <person name="Nolan M."/>
            <person name="Ovcharenko I."/>
            <person name="Pitluck S."/>
            <person name="Pollard M."/>
            <person name="Popkie A.P."/>
            <person name="Predki P."/>
            <person name="Quan G."/>
            <person name="Ramirez L."/>
            <person name="Rash S."/>
            <person name="Retterer J."/>
            <person name="Rodriguez A."/>
            <person name="Rogers S."/>
            <person name="Salamov A."/>
            <person name="Salazar A."/>
            <person name="She X."/>
            <person name="Smith D."/>
            <person name="Slezak T."/>
            <person name="Solovyev V."/>
            <person name="Thayer N."/>
            <person name="Tice H."/>
            <person name="Tsai M."/>
            <person name="Ustaszewska A."/>
            <person name="Vo N."/>
            <person name="Wagner M."/>
            <person name="Wheeler J."/>
            <person name="Wu K."/>
            <person name="Xie G."/>
            <person name="Yang J."/>
            <person name="Dubchak I."/>
            <person name="Furey T.S."/>
            <person name="DeJong P."/>
            <person name="Dickson M."/>
            <person name="Gordon D."/>
            <person name="Eichler E.E."/>
            <person name="Pennacchio L.A."/>
            <person name="Richardson P."/>
            <person name="Stubbs L."/>
            <person name="Rokhsar D.S."/>
            <person name="Myers R.M."/>
            <person name="Rubin E.M."/>
            <person name="Lucas S.M."/>
        </authorList>
    </citation>
    <scope>NUCLEOTIDE SEQUENCE [LARGE SCALE GENOMIC DNA]</scope>
</reference>
<reference key="6">
    <citation type="journal article" date="2004" name="Genome Res.">
        <title>The status, quality, and expansion of the NIH full-length cDNA project: the Mammalian Gene Collection (MGC).</title>
        <authorList>
            <consortium name="The MGC Project Team"/>
        </authorList>
    </citation>
    <scope>NUCLEOTIDE SEQUENCE [LARGE SCALE MRNA]</scope>
    <source>
        <tissue>Testis</tissue>
    </source>
</reference>
<reference key="7">
    <citation type="journal article" date="2006" name="J. Cell Sci.">
        <title>Novel function of beta-arrestin2 in the nucleus of mature spermatozoa.</title>
        <authorList>
            <person name="Neuhaus E.M."/>
            <person name="Mashukova A."/>
            <person name="Barbour J."/>
            <person name="Wolters D."/>
            <person name="Hatt H."/>
        </authorList>
    </citation>
    <scope>INTERACTION WITH ARRB2</scope>
</reference>
<reference key="8">
    <citation type="journal article" date="2008" name="Biochemistry (Mosc.)">
        <title>Investigation of glyceraldehyde-3-phosphate dehydrogenase from human sperms.</title>
        <authorList>
            <person name="Shchutskaya Y.Y."/>
            <person name="Elkina Y.L."/>
            <person name="Kuravsky M.L."/>
            <person name="Bragina E.E."/>
            <person name="Schmalhausen E.V."/>
        </authorList>
    </citation>
    <scope>DOMAIN N-TERMINAL EXTENSION</scope>
    <scope>SUBUNIT</scope>
</reference>
<reference key="9">
    <citation type="journal article" date="2011" name="Biochem. J.">
        <title>Structure and kinetic characterization of human sperm-specific glyceraldehyde-3-phosphate dehydrogenase, GAPDS.</title>
        <authorList>
            <person name="Chaikuad A."/>
            <person name="Shafqat N."/>
            <person name="Al-Mokhtar R."/>
            <person name="Cameron G."/>
            <person name="Clarke A.R."/>
            <person name="Brady R.L."/>
            <person name="Oppermann U."/>
            <person name="Frayne J."/>
            <person name="Yue W.W."/>
        </authorList>
    </citation>
    <scope>X-RAY CRYSTALLOGRAPHY (1.72 ANGSTROMS) OF 69-407 IN COMPLEX WITH NAD AND GLYCEROL</scope>
    <scope>ACTIVE SITE</scope>
    <scope>SUBUNIT</scope>
</reference>
<keyword id="KW-0002">3D-structure</keyword>
<keyword id="KW-0963">Cytoplasm</keyword>
<keyword id="KW-0324">Glycolysis</keyword>
<keyword id="KW-0520">NAD</keyword>
<keyword id="KW-0560">Oxidoreductase</keyword>
<keyword id="KW-1267">Proteomics identification</keyword>
<keyword id="KW-1185">Reference proteome</keyword>
<gene>
    <name type="primary">GAPDHS</name>
    <name type="synonym">GAPD2</name>
    <name type="synonym">GAPDH2</name>
    <name type="synonym">GAPDS</name>
    <name type="ORF">HSD-35</name>
    <name type="ORF">HSD35</name>
</gene>
<name>G3PT_HUMAN</name>